<comment type="function">
    <text evidence="1">Part of the MsrPQ system that repairs oxidized periplasmic proteins containing methionine sulfoxide residues (Met-O), using respiratory chain electrons. Thus protects these proteins from oxidative-stress damage caused by reactive species of oxygen and chlorine generated by the host defense mechanisms. MsrPQ is essential for the maintenance of envelope integrity under bleach stress, rescuing a wide series of structurally unrelated periplasmic proteins from methionine oxidation, including the primary periplasmic chaperone SurA and the lipoprotein Pal. The catalytic subunit MsrP is non-stereospecific, being able to reduce both (R-) and (S-) diastereoisomers of methionine sulfoxide.</text>
</comment>
<comment type="catalytic activity">
    <reaction evidence="1">
        <text>L-methionyl-[protein] + a quinone + H2O = L-methionyl-(S)-S-oxide-[protein] + a quinol</text>
        <dbReference type="Rhea" id="RHEA:51292"/>
        <dbReference type="Rhea" id="RHEA-COMP:12313"/>
        <dbReference type="Rhea" id="RHEA-COMP:12315"/>
        <dbReference type="ChEBI" id="CHEBI:15377"/>
        <dbReference type="ChEBI" id="CHEBI:16044"/>
        <dbReference type="ChEBI" id="CHEBI:24646"/>
        <dbReference type="ChEBI" id="CHEBI:44120"/>
        <dbReference type="ChEBI" id="CHEBI:132124"/>
    </reaction>
</comment>
<comment type="catalytic activity">
    <reaction evidence="1">
        <text>L-methionyl-[protein] + a quinone + H2O = L-methionyl-(R)-S-oxide-[protein] + a quinol</text>
        <dbReference type="Rhea" id="RHEA:51296"/>
        <dbReference type="Rhea" id="RHEA-COMP:12313"/>
        <dbReference type="Rhea" id="RHEA-COMP:12314"/>
        <dbReference type="ChEBI" id="CHEBI:15377"/>
        <dbReference type="ChEBI" id="CHEBI:16044"/>
        <dbReference type="ChEBI" id="CHEBI:24646"/>
        <dbReference type="ChEBI" id="CHEBI:45764"/>
        <dbReference type="ChEBI" id="CHEBI:132124"/>
    </reaction>
</comment>
<comment type="cofactor">
    <cofactor evidence="1">
        <name>Mo-molybdopterin</name>
        <dbReference type="ChEBI" id="CHEBI:71302"/>
    </cofactor>
    <text evidence="1">Binds 1 Mo-molybdopterin (Mo-MPT) cofactor per subunit.</text>
</comment>
<comment type="subunit">
    <text evidence="1">Heterodimer of a catalytic subunit (MsrP) and a heme-binding subunit (MsrQ).</text>
</comment>
<comment type="subcellular location">
    <subcellularLocation>
        <location evidence="1">Periplasm</location>
    </subcellularLocation>
    <text evidence="1">Is attached to the inner membrane when interacting with the MsrQ subunit.</text>
</comment>
<comment type="PTM">
    <text evidence="1">Predicted to be exported by the Tat system. The position of the signal peptide cleavage has not been experimentally proven.</text>
</comment>
<comment type="similarity">
    <text evidence="1">Belongs to the MsrP family.</text>
</comment>
<protein>
    <recommendedName>
        <fullName evidence="1">Protein-methionine-sulfoxide reductase catalytic subunit MsrP</fullName>
        <ecNumber evidence="1">1.8.5.-</ecNumber>
    </recommendedName>
</protein>
<proteinExistence type="inferred from homology"/>
<sequence length="334" mass="37411">MKKNQFLKESDVTAESVFFMKRRQVLKALGISAAALSLPHAAHADLLSWFKGNDRPPAPAGKPLEFSKPAAWQNNLPLTPVDKVSGYNNFYEFGLDKADPAANAGSLKTDPWTLKISGEVAKPLTLDHDDLTRRFPLEERIYRMRCVEAWSMVVPWIGFPLHKLLALAEPTSNAKYVAFETIYAPEQMPGQQDRFIGGGLKYPYVEGLRLDEAMHPLTLMTVGVYGKALPPQNGAPVRLIVPWKYGFKGIKSIVSIKLTRERPPTTWNLAAPDEYGFYANVNPHVDHPRWSQATERFIGSGGILDVQRQPTLLFNGYADQVASLYRGLDLRENF</sequence>
<accession>B1LQN8</accession>
<reference key="1">
    <citation type="journal article" date="2008" name="J. Bacteriol.">
        <title>Insights into the environmental resistance gene pool from the genome sequence of the multidrug-resistant environmental isolate Escherichia coli SMS-3-5.</title>
        <authorList>
            <person name="Fricke W.F."/>
            <person name="Wright M.S."/>
            <person name="Lindell A.H."/>
            <person name="Harkins D.M."/>
            <person name="Baker-Austin C."/>
            <person name="Ravel J."/>
            <person name="Stepanauskas R."/>
        </authorList>
    </citation>
    <scope>NUCLEOTIDE SEQUENCE [LARGE SCALE GENOMIC DNA]</scope>
    <source>
        <strain>SMS-3-5 / SECEC</strain>
    </source>
</reference>
<dbReference type="EC" id="1.8.5.-" evidence="1"/>
<dbReference type="EMBL" id="CP000970">
    <property type="protein sequence ID" value="ACB17059.1"/>
    <property type="molecule type" value="Genomic_DNA"/>
</dbReference>
<dbReference type="RefSeq" id="WP_000740100.1">
    <property type="nucleotide sequence ID" value="NC_010498.1"/>
</dbReference>
<dbReference type="SMR" id="B1LQN8"/>
<dbReference type="GeneID" id="75205791"/>
<dbReference type="KEGG" id="ecm:EcSMS35_1214"/>
<dbReference type="HOGENOM" id="CLU_045520_0_0_6"/>
<dbReference type="Proteomes" id="UP000007011">
    <property type="component" value="Chromosome"/>
</dbReference>
<dbReference type="GO" id="GO:0042597">
    <property type="term" value="C:periplasmic space"/>
    <property type="evidence" value="ECO:0007669"/>
    <property type="project" value="UniProtKB-SubCell"/>
</dbReference>
<dbReference type="GO" id="GO:0046872">
    <property type="term" value="F:metal ion binding"/>
    <property type="evidence" value="ECO:0007669"/>
    <property type="project" value="UniProtKB-KW"/>
</dbReference>
<dbReference type="GO" id="GO:0043546">
    <property type="term" value="F:molybdopterin cofactor binding"/>
    <property type="evidence" value="ECO:0007669"/>
    <property type="project" value="UniProtKB-UniRule"/>
</dbReference>
<dbReference type="GO" id="GO:0016672">
    <property type="term" value="F:oxidoreductase activity, acting on a sulfur group of donors, quinone or similar compound as acceptor"/>
    <property type="evidence" value="ECO:0007669"/>
    <property type="project" value="UniProtKB-UniRule"/>
</dbReference>
<dbReference type="GO" id="GO:0030091">
    <property type="term" value="P:protein repair"/>
    <property type="evidence" value="ECO:0007669"/>
    <property type="project" value="UniProtKB-UniRule"/>
</dbReference>
<dbReference type="CDD" id="cd02107">
    <property type="entry name" value="YedY_like_Moco"/>
    <property type="match status" value="1"/>
</dbReference>
<dbReference type="FunFam" id="3.90.420.10:FF:000001">
    <property type="entry name" value="Protein-methionine-sulfoxide reductase catalytic subunit MsrP"/>
    <property type="match status" value="1"/>
</dbReference>
<dbReference type="Gene3D" id="3.90.420.10">
    <property type="entry name" value="Oxidoreductase, molybdopterin-binding domain"/>
    <property type="match status" value="1"/>
</dbReference>
<dbReference type="HAMAP" id="MF_01206">
    <property type="entry name" value="MsrP"/>
    <property type="match status" value="1"/>
</dbReference>
<dbReference type="InterPro" id="IPR022867">
    <property type="entry name" value="MsrP"/>
</dbReference>
<dbReference type="InterPro" id="IPR000572">
    <property type="entry name" value="OxRdtase_Mopterin-bd_dom"/>
</dbReference>
<dbReference type="InterPro" id="IPR036374">
    <property type="entry name" value="OxRdtase_Mopterin-bd_sf"/>
</dbReference>
<dbReference type="InterPro" id="IPR006311">
    <property type="entry name" value="TAT_signal"/>
</dbReference>
<dbReference type="NCBIfam" id="NF003767">
    <property type="entry name" value="PRK05363.1"/>
    <property type="match status" value="1"/>
</dbReference>
<dbReference type="PANTHER" id="PTHR43032">
    <property type="entry name" value="PROTEIN-METHIONINE-SULFOXIDE REDUCTASE"/>
    <property type="match status" value="1"/>
</dbReference>
<dbReference type="PANTHER" id="PTHR43032:SF3">
    <property type="entry name" value="PROTEIN-METHIONINE-SULFOXIDE REDUCTASE CATALYTIC SUBUNIT MSRP"/>
    <property type="match status" value="1"/>
</dbReference>
<dbReference type="Pfam" id="PF00174">
    <property type="entry name" value="Oxidored_molyb"/>
    <property type="match status" value="1"/>
</dbReference>
<dbReference type="SUPFAM" id="SSF56524">
    <property type="entry name" value="Oxidoreductase molybdopterin-binding domain"/>
    <property type="match status" value="1"/>
</dbReference>
<dbReference type="PROSITE" id="PS51318">
    <property type="entry name" value="TAT"/>
    <property type="match status" value="1"/>
</dbReference>
<organism>
    <name type="scientific">Escherichia coli (strain SMS-3-5 / SECEC)</name>
    <dbReference type="NCBI Taxonomy" id="439855"/>
    <lineage>
        <taxon>Bacteria</taxon>
        <taxon>Pseudomonadati</taxon>
        <taxon>Pseudomonadota</taxon>
        <taxon>Gammaproteobacteria</taxon>
        <taxon>Enterobacterales</taxon>
        <taxon>Enterobacteriaceae</taxon>
        <taxon>Escherichia</taxon>
    </lineage>
</organism>
<name>MSRP_ECOSM</name>
<evidence type="ECO:0000255" key="1">
    <source>
        <dbReference type="HAMAP-Rule" id="MF_01206"/>
    </source>
</evidence>
<gene>
    <name evidence="1" type="primary">msrP</name>
    <name type="ordered locus">EcSMS35_1214</name>
</gene>
<feature type="signal peptide" description="Tat-type signal" evidence="1">
    <location>
        <begin position="1"/>
        <end position="44"/>
    </location>
</feature>
<feature type="chain" id="PRO_1000138715" description="Protein-methionine-sulfoxide reductase catalytic subunit MsrP" evidence="1">
    <location>
        <begin position="45"/>
        <end position="334"/>
    </location>
</feature>
<feature type="binding site" evidence="1">
    <location>
        <position position="88"/>
    </location>
    <ligand>
        <name>Mo-molybdopterin</name>
        <dbReference type="ChEBI" id="CHEBI:71302"/>
    </ligand>
</feature>
<feature type="binding site" evidence="1">
    <location>
        <begin position="91"/>
        <end position="92"/>
    </location>
    <ligand>
        <name>Mo-molybdopterin</name>
        <dbReference type="ChEBI" id="CHEBI:71302"/>
    </ligand>
</feature>
<feature type="binding site" evidence="1">
    <location>
        <position position="146"/>
    </location>
    <ligand>
        <name>Mo-molybdopterin</name>
        <dbReference type="ChEBI" id="CHEBI:71302"/>
    </ligand>
    <ligandPart>
        <name>Mo</name>
        <dbReference type="ChEBI" id="CHEBI:28685"/>
    </ligandPart>
</feature>
<feature type="binding site" evidence="1">
    <location>
        <position position="181"/>
    </location>
    <ligand>
        <name>Mo-molybdopterin</name>
        <dbReference type="ChEBI" id="CHEBI:71302"/>
    </ligand>
</feature>
<feature type="binding site" evidence="1">
    <location>
        <position position="233"/>
    </location>
    <ligand>
        <name>Mo-molybdopterin</name>
        <dbReference type="ChEBI" id="CHEBI:71302"/>
    </ligand>
</feature>
<feature type="binding site" evidence="1">
    <location>
        <position position="238"/>
    </location>
    <ligand>
        <name>Mo-molybdopterin</name>
        <dbReference type="ChEBI" id="CHEBI:71302"/>
    </ligand>
</feature>
<feature type="binding site" evidence="1">
    <location>
        <begin position="249"/>
        <end position="251"/>
    </location>
    <ligand>
        <name>Mo-molybdopterin</name>
        <dbReference type="ChEBI" id="CHEBI:71302"/>
    </ligand>
</feature>
<keyword id="KW-0479">Metal-binding</keyword>
<keyword id="KW-0500">Molybdenum</keyword>
<keyword id="KW-0560">Oxidoreductase</keyword>
<keyword id="KW-0574">Periplasm</keyword>
<keyword id="KW-0732">Signal</keyword>